<organism>
    <name type="scientific">Levilactobacillus brevis (strain ATCC 367 / BCRC 12310 / CIP 105137 / JCM 1170 / LMG 11437 / NCIMB 947 / NCTC 947)</name>
    <name type="common">Lactobacillus brevis</name>
    <dbReference type="NCBI Taxonomy" id="387344"/>
    <lineage>
        <taxon>Bacteria</taxon>
        <taxon>Bacillati</taxon>
        <taxon>Bacillota</taxon>
        <taxon>Bacilli</taxon>
        <taxon>Lactobacillales</taxon>
        <taxon>Lactobacillaceae</taxon>
        <taxon>Levilactobacillus</taxon>
    </lineage>
</organism>
<gene>
    <name evidence="1" type="primary">prmA</name>
    <name type="ordered locus">LVIS_0725</name>
</gene>
<evidence type="ECO:0000255" key="1">
    <source>
        <dbReference type="HAMAP-Rule" id="MF_00735"/>
    </source>
</evidence>
<feature type="chain" id="PRO_1000046036" description="Ribosomal protein L11 methyltransferase">
    <location>
        <begin position="1"/>
        <end position="316"/>
    </location>
</feature>
<feature type="binding site" evidence="1">
    <location>
        <position position="162"/>
    </location>
    <ligand>
        <name>S-adenosyl-L-methionine</name>
        <dbReference type="ChEBI" id="CHEBI:59789"/>
    </ligand>
</feature>
<feature type="binding site" evidence="1">
    <location>
        <position position="183"/>
    </location>
    <ligand>
        <name>S-adenosyl-L-methionine</name>
        <dbReference type="ChEBI" id="CHEBI:59789"/>
    </ligand>
</feature>
<feature type="binding site" evidence="1">
    <location>
        <position position="205"/>
    </location>
    <ligand>
        <name>S-adenosyl-L-methionine</name>
        <dbReference type="ChEBI" id="CHEBI:59789"/>
    </ligand>
</feature>
<feature type="binding site" evidence="1">
    <location>
        <position position="248"/>
    </location>
    <ligand>
        <name>S-adenosyl-L-methionine</name>
        <dbReference type="ChEBI" id="CHEBI:59789"/>
    </ligand>
</feature>
<dbReference type="EC" id="2.1.1.-" evidence="1"/>
<dbReference type="EMBL" id="CP000416">
    <property type="protein sequence ID" value="ABJ63868.1"/>
    <property type="molecule type" value="Genomic_DNA"/>
</dbReference>
<dbReference type="RefSeq" id="WP_011667499.1">
    <property type="nucleotide sequence ID" value="NC_008497.1"/>
</dbReference>
<dbReference type="SMR" id="Q03SF4"/>
<dbReference type="STRING" id="387344.LVIS_0725"/>
<dbReference type="KEGG" id="lbr:LVIS_0725"/>
<dbReference type="eggNOG" id="COG2264">
    <property type="taxonomic scope" value="Bacteria"/>
</dbReference>
<dbReference type="HOGENOM" id="CLU_049382_0_1_9"/>
<dbReference type="Proteomes" id="UP000001652">
    <property type="component" value="Chromosome"/>
</dbReference>
<dbReference type="GO" id="GO:0005737">
    <property type="term" value="C:cytoplasm"/>
    <property type="evidence" value="ECO:0007669"/>
    <property type="project" value="UniProtKB-SubCell"/>
</dbReference>
<dbReference type="GO" id="GO:0016279">
    <property type="term" value="F:protein-lysine N-methyltransferase activity"/>
    <property type="evidence" value="ECO:0007669"/>
    <property type="project" value="RHEA"/>
</dbReference>
<dbReference type="GO" id="GO:0032259">
    <property type="term" value="P:methylation"/>
    <property type="evidence" value="ECO:0007669"/>
    <property type="project" value="UniProtKB-KW"/>
</dbReference>
<dbReference type="CDD" id="cd02440">
    <property type="entry name" value="AdoMet_MTases"/>
    <property type="match status" value="1"/>
</dbReference>
<dbReference type="Gene3D" id="3.40.50.150">
    <property type="entry name" value="Vaccinia Virus protein VP39"/>
    <property type="match status" value="1"/>
</dbReference>
<dbReference type="HAMAP" id="MF_00735">
    <property type="entry name" value="Methyltr_PrmA"/>
    <property type="match status" value="1"/>
</dbReference>
<dbReference type="InterPro" id="IPR050078">
    <property type="entry name" value="Ribosomal_L11_MeTrfase_PrmA"/>
</dbReference>
<dbReference type="InterPro" id="IPR004498">
    <property type="entry name" value="Ribosomal_PrmA_MeTrfase"/>
</dbReference>
<dbReference type="InterPro" id="IPR029063">
    <property type="entry name" value="SAM-dependent_MTases_sf"/>
</dbReference>
<dbReference type="NCBIfam" id="TIGR00406">
    <property type="entry name" value="prmA"/>
    <property type="match status" value="1"/>
</dbReference>
<dbReference type="PANTHER" id="PTHR43648">
    <property type="entry name" value="ELECTRON TRANSFER FLAVOPROTEIN BETA SUBUNIT LYSINE METHYLTRANSFERASE"/>
    <property type="match status" value="1"/>
</dbReference>
<dbReference type="PANTHER" id="PTHR43648:SF1">
    <property type="entry name" value="ELECTRON TRANSFER FLAVOPROTEIN BETA SUBUNIT LYSINE METHYLTRANSFERASE"/>
    <property type="match status" value="1"/>
</dbReference>
<dbReference type="Pfam" id="PF06325">
    <property type="entry name" value="PrmA"/>
    <property type="match status" value="1"/>
</dbReference>
<dbReference type="PIRSF" id="PIRSF000401">
    <property type="entry name" value="RPL11_MTase"/>
    <property type="match status" value="1"/>
</dbReference>
<dbReference type="SUPFAM" id="SSF53335">
    <property type="entry name" value="S-adenosyl-L-methionine-dependent methyltransferases"/>
    <property type="match status" value="1"/>
</dbReference>
<accession>Q03SF4</accession>
<sequence>MQWTEVSVMTTNEAVEAVSNILQEAGASGVKIDDAADYANLKPGKYGEIVDLDSIPHRTSGAEISAYYPETIFVPEILPTIRQRVQELTQFGLDPTPGTVTTKAVDDESWATAWQKYYHPVRVTRYLTVTPSWEKYTPVQPNEHVIRLDPGMAFGTGTHPTTRLSMTALEMVVRGGETMYDVGTGSGVLSIAAKYLGVNQITAFDLDEVAVRSAKTNLDLNPIATDVVAKPNDLLKGIHHPVDLVVANILAEIILPLVPQAWENLTPGGYFLTSGIIADKLAEVVAAQEKQGFVIDNILQMKDWRGVIAHRPTEDE</sequence>
<name>PRMA_LEVBA</name>
<comment type="function">
    <text evidence="1">Methylates ribosomal protein L11.</text>
</comment>
<comment type="catalytic activity">
    <reaction evidence="1">
        <text>L-lysyl-[protein] + 3 S-adenosyl-L-methionine = N(6),N(6),N(6)-trimethyl-L-lysyl-[protein] + 3 S-adenosyl-L-homocysteine + 3 H(+)</text>
        <dbReference type="Rhea" id="RHEA:54192"/>
        <dbReference type="Rhea" id="RHEA-COMP:9752"/>
        <dbReference type="Rhea" id="RHEA-COMP:13826"/>
        <dbReference type="ChEBI" id="CHEBI:15378"/>
        <dbReference type="ChEBI" id="CHEBI:29969"/>
        <dbReference type="ChEBI" id="CHEBI:57856"/>
        <dbReference type="ChEBI" id="CHEBI:59789"/>
        <dbReference type="ChEBI" id="CHEBI:61961"/>
    </reaction>
</comment>
<comment type="subcellular location">
    <subcellularLocation>
        <location evidence="1">Cytoplasm</location>
    </subcellularLocation>
</comment>
<comment type="similarity">
    <text evidence="1">Belongs to the methyltransferase superfamily. PrmA family.</text>
</comment>
<proteinExistence type="inferred from homology"/>
<protein>
    <recommendedName>
        <fullName evidence="1">Ribosomal protein L11 methyltransferase</fullName>
        <shortName evidence="1">L11 Mtase</shortName>
        <ecNumber evidence="1">2.1.1.-</ecNumber>
    </recommendedName>
</protein>
<keyword id="KW-0963">Cytoplasm</keyword>
<keyword id="KW-0489">Methyltransferase</keyword>
<keyword id="KW-1185">Reference proteome</keyword>
<keyword id="KW-0949">S-adenosyl-L-methionine</keyword>
<keyword id="KW-0808">Transferase</keyword>
<reference key="1">
    <citation type="journal article" date="2006" name="Proc. Natl. Acad. Sci. U.S.A.">
        <title>Comparative genomics of the lactic acid bacteria.</title>
        <authorList>
            <person name="Makarova K.S."/>
            <person name="Slesarev A."/>
            <person name="Wolf Y.I."/>
            <person name="Sorokin A."/>
            <person name="Mirkin B."/>
            <person name="Koonin E.V."/>
            <person name="Pavlov A."/>
            <person name="Pavlova N."/>
            <person name="Karamychev V."/>
            <person name="Polouchine N."/>
            <person name="Shakhova V."/>
            <person name="Grigoriev I."/>
            <person name="Lou Y."/>
            <person name="Rohksar D."/>
            <person name="Lucas S."/>
            <person name="Huang K."/>
            <person name="Goodstein D.M."/>
            <person name="Hawkins T."/>
            <person name="Plengvidhya V."/>
            <person name="Welker D."/>
            <person name="Hughes J."/>
            <person name="Goh Y."/>
            <person name="Benson A."/>
            <person name="Baldwin K."/>
            <person name="Lee J.-H."/>
            <person name="Diaz-Muniz I."/>
            <person name="Dosti B."/>
            <person name="Smeianov V."/>
            <person name="Wechter W."/>
            <person name="Barabote R."/>
            <person name="Lorca G."/>
            <person name="Altermann E."/>
            <person name="Barrangou R."/>
            <person name="Ganesan B."/>
            <person name="Xie Y."/>
            <person name="Rawsthorne H."/>
            <person name="Tamir D."/>
            <person name="Parker C."/>
            <person name="Breidt F."/>
            <person name="Broadbent J.R."/>
            <person name="Hutkins R."/>
            <person name="O'Sullivan D."/>
            <person name="Steele J."/>
            <person name="Unlu G."/>
            <person name="Saier M.H. Jr."/>
            <person name="Klaenhammer T."/>
            <person name="Richardson P."/>
            <person name="Kozyavkin S."/>
            <person name="Weimer B.C."/>
            <person name="Mills D.A."/>
        </authorList>
    </citation>
    <scope>NUCLEOTIDE SEQUENCE [LARGE SCALE GENOMIC DNA]</scope>
    <source>
        <strain>ATCC 367 / BCRC 12310 / CIP 105137 / JCM 1170 / LMG 11437 / NCIMB 947 / NCTC 947</strain>
    </source>
</reference>